<dbReference type="EMBL" id="M19308">
    <property type="protein sequence ID" value="AAA61205.1"/>
    <property type="molecule type" value="mRNA"/>
</dbReference>
<dbReference type="EMBL" id="M19309">
    <property type="protein sequence ID" value="AAA61204.1"/>
    <property type="molecule type" value="mRNA"/>
</dbReference>
<dbReference type="EMBL" id="S69208">
    <property type="protein sequence ID" value="AAB30272.1"/>
    <property type="molecule type" value="mRNA"/>
</dbReference>
<dbReference type="EMBL" id="S69209">
    <property type="protein sequence ID" value="AAB30273.1"/>
    <property type="molecule type" value="mRNA"/>
</dbReference>
<dbReference type="EMBL" id="AJ011712">
    <property type="protein sequence ID" value="CAA09750.1"/>
    <property type="molecule type" value="Genomic_DNA"/>
</dbReference>
<dbReference type="EMBL" id="AJ011713">
    <property type="protein sequence ID" value="CAA09750.1"/>
    <property type="status" value="JOINED"/>
    <property type="molecule type" value="Genomic_DNA"/>
</dbReference>
<dbReference type="EMBL" id="AJ011712">
    <property type="protein sequence ID" value="CAA09751.1"/>
    <property type="molecule type" value="Genomic_DNA"/>
</dbReference>
<dbReference type="EMBL" id="AJ011713">
    <property type="protein sequence ID" value="CAA09751.1"/>
    <property type="status" value="JOINED"/>
    <property type="molecule type" value="Genomic_DNA"/>
</dbReference>
<dbReference type="EMBL" id="AJ011712">
    <property type="protein sequence ID" value="CAA09752.1"/>
    <property type="molecule type" value="Genomic_DNA"/>
</dbReference>
<dbReference type="EMBL" id="AJ011713">
    <property type="protein sequence ID" value="CAA09752.1"/>
    <property type="status" value="JOINED"/>
    <property type="molecule type" value="Genomic_DNA"/>
</dbReference>
<dbReference type="EMBL" id="BT019630">
    <property type="protein sequence ID" value="AAV38436.1"/>
    <property type="molecule type" value="mRNA"/>
</dbReference>
<dbReference type="EMBL" id="BC010963">
    <property type="protein sequence ID" value="AAH10963.1"/>
    <property type="molecule type" value="mRNA"/>
</dbReference>
<dbReference type="EMBL" id="BC022086">
    <property type="protein sequence ID" value="AAH22086.2"/>
    <property type="status" value="ALT_INIT"/>
    <property type="molecule type" value="mRNA"/>
</dbReference>
<dbReference type="EMBL" id="BC034143">
    <property type="protein sequence ID" value="AAH34143.1"/>
    <property type="molecule type" value="mRNA"/>
</dbReference>
<dbReference type="EMBL" id="S66057">
    <property type="protein sequence ID" value="AAD13978.1"/>
    <property type="status" value="ALT_SEQ"/>
    <property type="molecule type" value="Genomic_DNA"/>
</dbReference>
<dbReference type="EMBL" id="S66170">
    <property type="protein sequence ID" value="AAD13978.1"/>
    <property type="status" value="JOINED"/>
    <property type="molecule type" value="Genomic_DNA"/>
</dbReference>
<dbReference type="CCDS" id="CCDS12917.1">
    <molecule id="P13805-1"/>
</dbReference>
<dbReference type="CCDS" id="CCDS46185.1">
    <molecule id="P13805-2"/>
</dbReference>
<dbReference type="CCDS" id="CCDS59421.1">
    <molecule id="P13805-3"/>
</dbReference>
<dbReference type="PIR" id="A29783">
    <property type="entry name" value="TPHUTW"/>
</dbReference>
<dbReference type="RefSeq" id="NP_001119604.1">
    <molecule id="P13805-3"/>
    <property type="nucleotide sequence ID" value="NM_001126132.3"/>
</dbReference>
<dbReference type="RefSeq" id="NP_001119605.1">
    <molecule id="P13805-2"/>
    <property type="nucleotide sequence ID" value="NM_001126133.3"/>
</dbReference>
<dbReference type="RefSeq" id="NP_001278703.1">
    <molecule id="P13805-2"/>
    <property type="nucleotide sequence ID" value="NM_001291774.2"/>
</dbReference>
<dbReference type="RefSeq" id="NP_003274.3">
    <molecule id="P13805-1"/>
    <property type="nucleotide sequence ID" value="NM_003283.5"/>
</dbReference>
<dbReference type="RefSeq" id="XP_016882675.1">
    <molecule id="P13805-3"/>
    <property type="nucleotide sequence ID" value="XM_017027186.2"/>
</dbReference>
<dbReference type="RefSeq" id="XP_054177878.1">
    <molecule id="P13805-3"/>
    <property type="nucleotide sequence ID" value="XM_054321903.1"/>
</dbReference>
<dbReference type="SMR" id="P13805"/>
<dbReference type="BioGRID" id="112992">
    <property type="interactions" value="80"/>
</dbReference>
<dbReference type="FunCoup" id="P13805">
    <property type="interactions" value="70"/>
</dbReference>
<dbReference type="IntAct" id="P13805">
    <property type="interactions" value="77"/>
</dbReference>
<dbReference type="MINT" id="P13805"/>
<dbReference type="STRING" id="9606.ENSP00000467176"/>
<dbReference type="GlyGen" id="P13805">
    <property type="glycosylation" value="1 site, 1 O-linked glycan (1 site)"/>
</dbReference>
<dbReference type="iPTMnet" id="P13805"/>
<dbReference type="PhosphoSitePlus" id="P13805"/>
<dbReference type="BioMuta" id="TNNT1"/>
<dbReference type="DMDM" id="1174800"/>
<dbReference type="jPOST" id="P13805"/>
<dbReference type="MassIVE" id="P13805"/>
<dbReference type="PaxDb" id="9606-ENSP00000467176"/>
<dbReference type="PeptideAtlas" id="P13805"/>
<dbReference type="ProteomicsDB" id="52991">
    <molecule id="P13805-1"/>
</dbReference>
<dbReference type="ProteomicsDB" id="52992">
    <molecule id="P13805-2"/>
</dbReference>
<dbReference type="ProteomicsDB" id="52993">
    <molecule id="P13805-3"/>
</dbReference>
<dbReference type="Antibodypedia" id="4195">
    <property type="antibodies" value="270 antibodies from 33 providers"/>
</dbReference>
<dbReference type="DNASU" id="7138"/>
<dbReference type="Ensembl" id="ENST00000291901.12">
    <molecule id="P13805-3"/>
    <property type="protein sequence ID" value="ENSP00000291901.8"/>
    <property type="gene ID" value="ENSG00000105048.18"/>
</dbReference>
<dbReference type="Ensembl" id="ENST00000356783.9">
    <molecule id="P13805-2"/>
    <property type="protein sequence ID" value="ENSP00000349233.4"/>
    <property type="gene ID" value="ENSG00000105048.18"/>
</dbReference>
<dbReference type="Ensembl" id="ENST00000587758.5">
    <molecule id="P13805-2"/>
    <property type="protein sequence ID" value="ENSP00000467789.1"/>
    <property type="gene ID" value="ENSG00000105048.18"/>
</dbReference>
<dbReference type="Ensembl" id="ENST00000588981.6">
    <molecule id="P13805-1"/>
    <property type="protein sequence ID" value="ENSP00000467176.1"/>
    <property type="gene ID" value="ENSG00000105048.18"/>
</dbReference>
<dbReference type="GeneID" id="7138"/>
<dbReference type="KEGG" id="hsa:7138"/>
<dbReference type="MANE-Select" id="ENST00000588981.6">
    <property type="protein sequence ID" value="ENSP00000467176.1"/>
    <property type="RefSeq nucleotide sequence ID" value="NM_003283.6"/>
    <property type="RefSeq protein sequence ID" value="NP_003274.3"/>
</dbReference>
<dbReference type="UCSC" id="uc002qjb.5">
    <molecule id="P13805-1"/>
    <property type="organism name" value="human"/>
</dbReference>
<dbReference type="AGR" id="HGNC:11948"/>
<dbReference type="CTD" id="7138"/>
<dbReference type="DisGeNET" id="7138"/>
<dbReference type="GeneCards" id="TNNT1"/>
<dbReference type="HGNC" id="HGNC:11948">
    <property type="gene designation" value="TNNT1"/>
</dbReference>
<dbReference type="HPA" id="ENSG00000105048">
    <property type="expression patterns" value="Group enriched (skeletal muscle, tongue)"/>
</dbReference>
<dbReference type="MalaCards" id="TNNT1"/>
<dbReference type="MIM" id="191041">
    <property type="type" value="gene"/>
</dbReference>
<dbReference type="MIM" id="605355">
    <property type="type" value="phenotype"/>
</dbReference>
<dbReference type="MIM" id="620386">
    <property type="type" value="phenotype"/>
</dbReference>
<dbReference type="MIM" id="620389">
    <property type="type" value="phenotype"/>
</dbReference>
<dbReference type="neXtProt" id="NX_P13805"/>
<dbReference type="OpenTargets" id="ENSG00000105048"/>
<dbReference type="Orphanet" id="98902">
    <property type="disease" value="Amish nemaline myopathy"/>
</dbReference>
<dbReference type="PharmGKB" id="PA36637"/>
<dbReference type="VEuPathDB" id="HostDB:ENSG00000105048"/>
<dbReference type="eggNOG" id="KOG3634">
    <property type="taxonomic scope" value="Eukaryota"/>
</dbReference>
<dbReference type="GeneTree" id="ENSGT00940000160609"/>
<dbReference type="InParanoid" id="P13805"/>
<dbReference type="OMA" id="EWIYELE"/>
<dbReference type="OrthoDB" id="330499at2759"/>
<dbReference type="PAN-GO" id="P13805">
    <property type="GO annotations" value="5 GO annotations based on evolutionary models"/>
</dbReference>
<dbReference type="PhylomeDB" id="P13805"/>
<dbReference type="PathwayCommons" id="P13805"/>
<dbReference type="Reactome" id="R-HSA-390522">
    <property type="pathway name" value="Striated Muscle Contraction"/>
</dbReference>
<dbReference type="SignaLink" id="P13805"/>
<dbReference type="BioGRID-ORCS" id="7138">
    <property type="hits" value="85 hits in 1153 CRISPR screens"/>
</dbReference>
<dbReference type="ChiTaRS" id="TNNT1">
    <property type="organism name" value="human"/>
</dbReference>
<dbReference type="GeneWiki" id="TNNT1"/>
<dbReference type="GenomeRNAi" id="7138"/>
<dbReference type="Pharos" id="P13805">
    <property type="development level" value="Tbio"/>
</dbReference>
<dbReference type="PRO" id="PR:P13805"/>
<dbReference type="Proteomes" id="UP000005640">
    <property type="component" value="Chromosome 19"/>
</dbReference>
<dbReference type="RNAct" id="P13805">
    <property type="molecule type" value="protein"/>
</dbReference>
<dbReference type="Bgee" id="ENSG00000105048">
    <property type="expression patterns" value="Expressed in gluteal muscle and 121 other cell types or tissues"/>
</dbReference>
<dbReference type="ExpressionAtlas" id="P13805">
    <property type="expression patterns" value="baseline and differential"/>
</dbReference>
<dbReference type="GO" id="GO:0005829">
    <property type="term" value="C:cytosol"/>
    <property type="evidence" value="ECO:0000304"/>
    <property type="project" value="Reactome"/>
</dbReference>
<dbReference type="GO" id="GO:0005861">
    <property type="term" value="C:troponin complex"/>
    <property type="evidence" value="ECO:0000314"/>
    <property type="project" value="UniProtKB"/>
</dbReference>
<dbReference type="GO" id="GO:0005523">
    <property type="term" value="F:tropomyosin binding"/>
    <property type="evidence" value="ECO:0000315"/>
    <property type="project" value="UniProtKB"/>
</dbReference>
<dbReference type="GO" id="GO:0031014">
    <property type="term" value="F:troponin T binding"/>
    <property type="evidence" value="ECO:0000318"/>
    <property type="project" value="GO_Central"/>
</dbReference>
<dbReference type="GO" id="GO:0045932">
    <property type="term" value="P:negative regulation of muscle contraction"/>
    <property type="evidence" value="ECO:0000314"/>
    <property type="project" value="UniProtKB"/>
</dbReference>
<dbReference type="GO" id="GO:0003009">
    <property type="term" value="P:skeletal muscle contraction"/>
    <property type="evidence" value="ECO:0000315"/>
    <property type="project" value="UniProtKB"/>
</dbReference>
<dbReference type="GO" id="GO:0031444">
    <property type="term" value="P:slow-twitch skeletal muscle fiber contraction"/>
    <property type="evidence" value="ECO:0000318"/>
    <property type="project" value="GO_Central"/>
</dbReference>
<dbReference type="GO" id="GO:0014883">
    <property type="term" value="P:transition between fast and slow fiber"/>
    <property type="evidence" value="ECO:0007669"/>
    <property type="project" value="Ensembl"/>
</dbReference>
<dbReference type="Gene3D" id="1.20.5.350">
    <property type="match status" value="2"/>
</dbReference>
<dbReference type="InterPro" id="IPR027707">
    <property type="entry name" value="TNNT"/>
</dbReference>
<dbReference type="InterPro" id="IPR001978">
    <property type="entry name" value="Troponin"/>
</dbReference>
<dbReference type="InterPro" id="IPR038077">
    <property type="entry name" value="Troponin_sf"/>
</dbReference>
<dbReference type="PANTHER" id="PTHR11521">
    <property type="entry name" value="TROPONIN T"/>
    <property type="match status" value="1"/>
</dbReference>
<dbReference type="PANTHER" id="PTHR11521:SF6">
    <property type="entry name" value="TROPONIN T, SLOW SKELETAL MUSCLE"/>
    <property type="match status" value="1"/>
</dbReference>
<dbReference type="Pfam" id="PF00992">
    <property type="entry name" value="Troponin"/>
    <property type="match status" value="1"/>
</dbReference>
<dbReference type="SUPFAM" id="SSF90250">
    <property type="entry name" value="Troponin coil-coiled subunits"/>
    <property type="match status" value="1"/>
</dbReference>
<accession>P13805</accession>
<accession>O95472</accession>
<accession>Q16061</accession>
<accession>Q5U0E1</accession>
<name>TNNT1_HUMAN</name>
<proteinExistence type="evidence at protein level"/>
<comment type="function">
    <text>Troponin T is the tropomyosin-binding subunit of troponin, the thin filament regulatory complex which confers calcium-sensitivity to striated muscle actomyosin ATPase activity.</text>
</comment>
<comment type="subunit">
    <text evidence="8">Interacts with TPM3.</text>
</comment>
<comment type="interaction">
    <interactant intactId="EBI-726527">
        <id>P13805</id>
    </interactant>
    <interactant intactId="EBI-10171416">
        <id>Q96JN2-2</id>
        <label>CCDC136</label>
    </interactant>
    <organismsDiffer>false</organismsDiffer>
    <experiments>3</experiments>
</comment>
<comment type="interaction">
    <interactant intactId="EBI-726527">
        <id>P13805</id>
    </interactant>
    <interactant intactId="EBI-10171697">
        <id>Q6A162</id>
        <label>KRT40</label>
    </interactant>
    <organismsDiffer>false</organismsDiffer>
    <experiments>3</experiments>
</comment>
<comment type="interaction">
    <interactant intactId="EBI-726527">
        <id>P13805</id>
    </interactant>
    <interactant intactId="EBI-740738">
        <id>O95751</id>
        <label>LDOC1</label>
    </interactant>
    <organismsDiffer>false</organismsDiffer>
    <experiments>4</experiments>
</comment>
<comment type="interaction">
    <interactant intactId="EBI-726527">
        <id>P13805</id>
    </interactant>
    <interactant intactId="EBI-399246">
        <id>Q9UBU8</id>
        <label>MORF4L1</label>
    </interactant>
    <organismsDiffer>false</organismsDiffer>
    <experiments>3</experiments>
</comment>
<comment type="interaction">
    <interactant intactId="EBI-726527">
        <id>P13805</id>
    </interactant>
    <interactant intactId="EBI-2007911">
        <id>Q16236</id>
        <label>NFE2L2</label>
    </interactant>
    <organismsDiffer>false</organismsDiffer>
    <experiments>4</experiments>
</comment>
<comment type="interaction">
    <interactant intactId="EBI-726527">
        <id>P13805</id>
    </interactant>
    <interactant intactId="EBI-716225">
        <id>P62380</id>
        <label>TBPL1</label>
    </interactant>
    <organismsDiffer>false</organismsDiffer>
    <experiments>3</experiments>
</comment>
<comment type="interaction">
    <interactant intactId="EBI-726527">
        <id>P13805</id>
    </interactant>
    <interactant intactId="EBI-1105213">
        <id>Q9UBB9</id>
        <label>TFIP11</label>
    </interactant>
    <organismsDiffer>false</organismsDiffer>
    <experiments>4</experiments>
</comment>
<comment type="interaction">
    <interactant intactId="EBI-726527">
        <id>P13805</id>
    </interactant>
    <interactant intactId="EBI-351158">
        <id>P09493</id>
        <label>TPM1</label>
    </interactant>
    <organismsDiffer>false</organismsDiffer>
    <experiments>4</experiments>
</comment>
<comment type="interaction">
    <interactant intactId="EBI-726527">
        <id>P13805</id>
    </interactant>
    <interactant intactId="EBI-10184033">
        <id>Q5VU62</id>
        <label>TPM3</label>
    </interactant>
    <organismsDiffer>false</organismsDiffer>
    <experiments>3</experiments>
</comment>
<comment type="interaction">
    <interactant intactId="EBI-12151635">
        <id>P13805-3</id>
    </interactant>
    <interactant intactId="EBI-3044087">
        <id>Q7Z3Y8</id>
        <label>KRT27</label>
    </interactant>
    <organismsDiffer>false</organismsDiffer>
    <experiments>3</experiments>
</comment>
<comment type="interaction">
    <interactant intactId="EBI-12151635">
        <id>P13805-3</id>
    </interactant>
    <interactant intactId="EBI-2007911">
        <id>Q16236</id>
        <label>NFE2L2</label>
    </interactant>
    <organismsDiffer>false</organismsDiffer>
    <experiments>3</experiments>
</comment>
<comment type="interaction">
    <interactant intactId="EBI-12151635">
        <id>P13805-3</id>
    </interactant>
    <interactant intactId="EBI-17181801">
        <id>P0C264</id>
        <label>SBK3</label>
    </interactant>
    <organismsDiffer>false</organismsDiffer>
    <experiments>3</experiments>
</comment>
<comment type="interaction">
    <interactant intactId="EBI-12151635">
        <id>P13805-3</id>
    </interactant>
    <interactant intactId="EBI-742426">
        <id>Q9H190</id>
        <label>SDCBP2</label>
    </interactant>
    <organismsDiffer>false</organismsDiffer>
    <experiments>3</experiments>
</comment>
<comment type="interaction">
    <interactant intactId="EBI-12151635">
        <id>P13805-3</id>
    </interactant>
    <interactant intactId="EBI-746692">
        <id>P19237</id>
        <label>TNNI1</label>
    </interactant>
    <organismsDiffer>false</organismsDiffer>
    <experiments>3</experiments>
</comment>
<comment type="interaction">
    <interactant intactId="EBI-12151635">
        <id>P13805-3</id>
    </interactant>
    <interactant intactId="EBI-7746394">
        <id>P48788</id>
        <label>TNNI2</label>
    </interactant>
    <organismsDiffer>false</organismsDiffer>
    <experiments>3</experiments>
</comment>
<comment type="interaction">
    <interactant intactId="EBI-12151635">
        <id>P13805-3</id>
    </interactant>
    <interactant intactId="EBI-17559309">
        <id>P45379-11</id>
        <label>TNNT2</label>
    </interactant>
    <organismsDiffer>false</organismsDiffer>
    <experiments>3</experiments>
</comment>
<comment type="interaction">
    <interactant intactId="EBI-12151635">
        <id>P13805-3</id>
    </interactant>
    <interactant intactId="EBI-12123928">
        <id>P09493-10</id>
        <label>TPM1</label>
    </interactant>
    <organismsDiffer>false</organismsDiffer>
    <experiments>4</experiments>
</comment>
<comment type="interaction">
    <interactant intactId="EBI-12151635">
        <id>P13805-3</id>
    </interactant>
    <interactant intactId="EBI-355607">
        <id>P06753</id>
        <label>TPM3</label>
    </interactant>
    <organismsDiffer>false</organismsDiffer>
    <experiments>3</experiments>
</comment>
<comment type="interaction">
    <interactant intactId="EBI-12151635">
        <id>P13805-3</id>
    </interactant>
    <interactant intactId="EBI-947459">
        <id>Q9H2G4</id>
        <label>TSPYL2</label>
    </interactant>
    <organismsDiffer>false</organismsDiffer>
    <experiments>3</experiments>
</comment>
<comment type="alternative products">
    <event type="alternative splicing"/>
    <isoform>
        <id>P13805-1</id>
        <name>1</name>
        <sequence type="displayed"/>
    </isoform>
    <isoform>
        <id>P13805-2</id>
        <name>2</name>
        <sequence type="described" ref="VSP_006639 VSP_006640"/>
    </isoform>
    <isoform>
        <id>P13805-3</id>
        <name>3</name>
        <sequence type="described" ref="VSP_006640"/>
    </isoform>
</comment>
<comment type="disease" evidence="3 6">
    <disease id="DI-02036">
        <name>Nemaline myopathy 5A, autosomal recessive, severe infantile</name>
        <acronym>NEM5A</acronym>
        <description>A form of nemaline myopathy. Nemaline myopathies are muscular disorders characterized by muscle weakness of varying severity and onset, and abnormal thread-like or rod-shaped structures in muscle fibers on histologic examination. NEM5A is a severe and progressive form characterized by symptom onset soon after birth or in early infancy. Affected infants display tremors with hypotonia and mild contractures of the shoulders and hips. Proximal contractures progressively weaken and a pectus carinatum deformity develops before children die of respiratory insufficiency, usually in the second year.</description>
        <dbReference type="MIM" id="605355"/>
    </disease>
    <text>The disease is caused by variants affecting the gene represented in this entry.</text>
</comment>
<comment type="disease" evidence="5 7 8">
    <disease id="DI-06692">
        <name>Nemaline myopathy 5B, autosomal recessive, childhood-onset</name>
        <acronym>NEM5B</acronym>
        <description>A form of nemaline myopathy. Nemaline myopathies are muscular disorders characterized by muscle weakness of varying severity and onset, and abnormal thread-like or rod-shaped structures in muscle fibers on histologic examination. NEM5B is characterized by proximal muscle weakness of the lower and upper limbs, gait abnormalities, and delayed motor development in some affected individuals. Most patients remain ambulatory even into late adulthood and develop restrictive respiratory insufficiency with decreased forced vital capacity.</description>
        <dbReference type="MIM" id="620386"/>
    </disease>
    <text>The disease is caused by variants affecting the gene represented in this entry.</text>
</comment>
<comment type="disease" evidence="4 8">
    <disease id="DI-06693">
        <name>Nemaline myopathy 5C, autosomal dominant</name>
        <acronym>NEM5C</acronym>
        <description>A form of nemaline myopathy. Nemaline myopathies are muscular disorders characterized by muscle weakness of varying severity and onset, and abnormal thread-like or rod-shaped structures in muscle fibers on histologic examination. NEM5C is a relatively mild skeletal muscle disorder appearing in the first or second decades. Main clinical features include difficulty walking on the heels, waddling gait, proximal muscle weakness affecting the upper and lower limbs, and Gowers sign. Patients remain ambulatory into late adulthood.</description>
        <dbReference type="MIM" id="620389"/>
    </disease>
    <text>The disease is caused by variants affecting the gene represented in this entry.</text>
</comment>
<comment type="similarity">
    <text evidence="11">Belongs to the troponin T family.</text>
</comment>
<comment type="sequence caution" evidence="11">
    <conflict type="erroneous initiation">
        <sequence resource="EMBL-CDS" id="AAH22086"/>
    </conflict>
</comment>
<feature type="chain" id="PRO_0000186168" description="Troponin T, slow skeletal muscle">
    <location>
        <begin position="1"/>
        <end position="278"/>
    </location>
</feature>
<feature type="region of interest" description="Disordered" evidence="2">
    <location>
        <begin position="1"/>
        <end position="63"/>
    </location>
</feature>
<feature type="region of interest" description="Disordered" evidence="2">
    <location>
        <begin position="105"/>
        <end position="153"/>
    </location>
</feature>
<feature type="compositionally biased region" description="Acidic residues" evidence="2">
    <location>
        <begin position="1"/>
        <end position="37"/>
    </location>
</feature>
<feature type="compositionally biased region" description="Pro residues" evidence="2">
    <location>
        <begin position="43"/>
        <end position="55"/>
    </location>
</feature>
<feature type="compositionally biased region" description="Basic and acidic residues" evidence="2">
    <location>
        <begin position="105"/>
        <end position="149"/>
    </location>
</feature>
<feature type="modified residue" description="Phosphoserine; by CK2" evidence="1">
    <location>
        <position position="2"/>
    </location>
</feature>
<feature type="splice variant" id="VSP_006639" description="In isoform 2." evidence="10">
    <location>
        <begin position="25"/>
        <end position="35"/>
    </location>
</feature>
<feature type="splice variant" id="VSP_006640" description="In isoform 2 and isoform 3." evidence="9 10">
    <location>
        <begin position="205"/>
        <end position="220"/>
    </location>
</feature>
<feature type="sequence variant" id="VAR_088549" description="In NEM5A; likely pathogenic." evidence="6">
    <location>
        <begin position="6"/>
        <end position="278"/>
    </location>
</feature>
<feature type="sequence variant" id="VAR_088550" description="In NEM5C; uncertain significance; sligthly increased interaction with TPM3 both in the presence and absence of calcium." evidence="8">
    <original>D</original>
    <variation>A</variation>
    <location>
        <position position="65"/>
    </location>
</feature>
<feature type="sequence variant" id="VAR_088551" description="In NEM5B; likely pathogenic; loss-of-function variant unable to rescue the myopathic phenotype in zebrafish morphants; severely decreased interaction with TPM3 in absence of calcium; loss of interaction with TPM3 in the presence of calcium; dbSNP:rs199701688." evidence="5 8">
    <original>L</original>
    <variation>P</variation>
    <location>
        <position position="96"/>
    </location>
</feature>
<feature type="sequence variant" id="VAR_088552" description="In NEM5C; uncertain significance; does not affect levels of full-length protein in patient muscle; decreased interaction with TPM3 in the presence of calcium; no effect on interaction with TPM3 in the absence of calcium; dbSNP:rs2085441049." evidence="4 8">
    <original>E</original>
    <variation>V</variation>
    <location>
        <position position="104"/>
    </location>
</feature>
<feature type="sequence variant" id="VAR_088553" description="In NEM5A; likely pathogenic." evidence="6">
    <location>
        <begin position="112"/>
        <end position="278"/>
    </location>
</feature>
<feature type="sequence variant" id="VAR_088554" description="In NEM5A; likely pathogenic." evidence="3">
    <location>
        <begin position="180"/>
        <end position="278"/>
    </location>
</feature>
<feature type="sequence variant" id="VAR_088555" description="In NEM5B; likely pathogenic; loss-of-function variant unable to rescue the myopathic phenotype in zebrafish morphants." evidence="7">
    <original>A</original>
    <variation>P</variation>
    <location>
        <position position="242"/>
    </location>
</feature>
<feature type="sequence conflict" description="In Ref. 1; AAA61204." evidence="11" ref="1">
    <original>E</original>
    <variation>D</variation>
    <location>
        <position position="20"/>
    </location>
</feature>
<sequence>MSDTEEQEYEEEQPEEEAAEEEEEAPEEPEPVAEPEEERPKPSRPVVPPLIPPKIPEGERVDFDDIHRKRMEKDLLELQTLIDVHFEQRKKEEEELVALKERIERRRSERAEQQRFRTEKERERQAKLAEEKMRKEEEEAKKRAEDDAKKKKVLSNMGAHFGGYLVKAEQKRGKRQTGREMKVRILSERKKPLDIDYMGEEQLRARSAWLPPSQPSCPAREKAQELSDWIHQLESEKFDLMAKLKQQKYEINVLYNRISHAQKFRKGAGKGRVGGRWK</sequence>
<evidence type="ECO:0000250" key="1"/>
<evidence type="ECO:0000256" key="2">
    <source>
        <dbReference type="SAM" id="MobiDB-lite"/>
    </source>
</evidence>
<evidence type="ECO:0000269" key="3">
    <source>
    </source>
</evidence>
<evidence type="ECO:0000269" key="4">
    <source>
    </source>
</evidence>
<evidence type="ECO:0000269" key="5">
    <source>
    </source>
</evidence>
<evidence type="ECO:0000269" key="6">
    <source>
    </source>
</evidence>
<evidence type="ECO:0000269" key="7">
    <source>
    </source>
</evidence>
<evidence type="ECO:0000269" key="8">
    <source>
    </source>
</evidence>
<evidence type="ECO:0000303" key="9">
    <source>
    </source>
</evidence>
<evidence type="ECO:0000303" key="10">
    <source ref="4"/>
</evidence>
<evidence type="ECO:0000305" key="11"/>
<reference key="1">
    <citation type="journal article" date="1987" name="J. Biol. Chem.">
        <title>Alternative splicing generates variants in important functional domains of human slow skeletal troponin T.</title>
        <authorList>
            <person name="Gahlmann R."/>
            <person name="Troutt A.B."/>
            <person name="Wade R.P."/>
            <person name="Gunning P."/>
            <person name="Kedes L."/>
        </authorList>
    </citation>
    <scope>NUCLEOTIDE SEQUENCE [MRNA]</scope>
</reference>
<reference key="2">
    <citation type="journal article" date="1994" name="Biochem. Biophys. Res. Commun.">
        <title>A new human slow skeletal troponin T (TnTs) mRNA isoform derived from alternative splicing of a single gene.</title>
        <authorList>
            <person name="Samson F."/>
            <person name="Mesnard L."/>
            <person name="Mihovilovic M."/>
            <person name="Potter T.G."/>
            <person name="Mercadier J.-J."/>
            <person name="Roses A.D."/>
            <person name="Gilbert J.R."/>
        </authorList>
    </citation>
    <scope>NUCLEOTIDE SEQUENCE [MRNA]</scope>
    <source>
        <tissue>Skeletal muscle</tissue>
    </source>
</reference>
<reference key="3">
    <citation type="journal article" date="1999" name="Genomics">
        <title>Close physical linkage of human troponin genes: organization, sequence, and expression of the locus encoding cardiac troponin I and slow skeletal troponin T.</title>
        <authorList>
            <person name="Barton P.J.R."/>
            <person name="Cullen M.E."/>
            <person name="Townsend P.J."/>
            <person name="Brand N.J."/>
            <person name="Mullen A.J."/>
            <person name="Norman D.A.M."/>
            <person name="Bhavsar P.K."/>
            <person name="Yacoub M.H."/>
        </authorList>
    </citation>
    <scope>NUCLEOTIDE SEQUENCE [GENOMIC DNA] (ISOFORMS 1; 2 AND 3)</scope>
</reference>
<reference key="4">
    <citation type="submission" date="2004-10" db="EMBL/GenBank/DDBJ databases">
        <title>Cloning of human full-length CDSs in BD Creator(TM) system donor vector.</title>
        <authorList>
            <person name="Kalnine N."/>
            <person name="Chen X."/>
            <person name="Rolfs A."/>
            <person name="Halleck A."/>
            <person name="Hines L."/>
            <person name="Eisenstein S."/>
            <person name="Koundinya M."/>
            <person name="Raphael J."/>
            <person name="Moreira D."/>
            <person name="Kelley T."/>
            <person name="LaBaer J."/>
            <person name="Lin Y."/>
            <person name="Phelan M."/>
            <person name="Farmer A."/>
        </authorList>
    </citation>
    <scope>NUCLEOTIDE SEQUENCE [LARGE SCALE MRNA] (ISOFORM 2)</scope>
</reference>
<reference key="5">
    <citation type="journal article" date="2004" name="Genome Res.">
        <title>The status, quality, and expansion of the NIH full-length cDNA project: the Mammalian Gene Collection (MGC).</title>
        <authorList>
            <consortium name="The MGC Project Team"/>
        </authorList>
    </citation>
    <scope>NUCLEOTIDE SEQUENCE [LARGE SCALE MRNA] (ISOFORM 3)</scope>
    <source>
        <tissue>Skeletal muscle</tissue>
    </source>
</reference>
<reference key="6">
    <citation type="journal article" date="1993" name="Cell Biochem. Funct.">
        <title>Isolation and cloning by a polymerase chain reaction of a genomic DNA fragment of the human slow skeletal troponin (TNNT1) gene.</title>
        <authorList>
            <person name="Novelli G."/>
            <person name="Gennarelli M."/>
            <person name="Sangiuolo F."/>
            <person name="D'Agruma L."/>
            <person name="Lo Cicero S."/>
            <person name="Melchionda S."/>
            <person name="Dallapiccola B."/>
        </authorList>
    </citation>
    <scope>NUCLEOTIDE SEQUENCE [GENOMIC DNA] OF 254-278</scope>
</reference>
<reference key="7">
    <citation type="journal article" date="2000" name="Am. J. Hum. Genet.">
        <title>A novel nemaline myopathy in the Amish caused by a mutation in troponin T1.</title>
        <authorList>
            <person name="Johnston J.J."/>
            <person name="Kelley R.I."/>
            <person name="Crawford T.O."/>
            <person name="Morton D.H."/>
            <person name="Agarwala R."/>
            <person name="Koch T."/>
            <person name="Schaeffer A.A."/>
            <person name="Francomano C.A."/>
            <person name="Biesecker L.G."/>
        </authorList>
    </citation>
    <scope>VARIANT NEM5A 180-GLU--LYS-278 DEL</scope>
    <scope>INVOLVEMENT IN NEM5A</scope>
</reference>
<reference key="8">
    <citation type="journal article" date="2017" name="Mol. Genet. Genomic Med.">
        <title>Novel autosomal dominant TNNT1 mutation causing nemaline myopathy.</title>
        <authorList>
            <person name="Konersman C.G."/>
            <person name="Freyermuth F."/>
            <person name="Winder T.L."/>
            <person name="Lawlor M.W."/>
            <person name="Lagier-Tourenne C."/>
            <person name="Patel S.B."/>
        </authorList>
    </citation>
    <scope>VARIANT NEM5C VAL-104</scope>
    <scope>CHARACTERIZATION OF VARIANT NEM5C VAL-104</scope>
    <scope>INVOLVEMENT IN NEM5C</scope>
</reference>
<reference key="9">
    <citation type="journal article" date="2020" name="Ann. Neurol.">
        <title>Novel Recessive TNNT1 Congenital Core-Rod Myopathy in French Canadians.</title>
        <authorList>
            <person name="Pellerin D."/>
            <person name="Aykanat A."/>
            <person name="Ellezam B."/>
            <person name="Troiano E.C."/>
            <person name="Karamchandani J."/>
            <person name="Dicaire M.J."/>
            <person name="Petitclerc M."/>
            <person name="Robertson R."/>
            <person name="Allard-Chamard X."/>
            <person name="Brunet D."/>
            <person name="Konersman C.G."/>
            <person name="Mathieu J."/>
            <person name="Warman Chardon J."/>
            <person name="Gupta V.A."/>
            <person name="Beggs A.H."/>
            <person name="Brais B."/>
            <person name="Chrestian N."/>
        </authorList>
    </citation>
    <scope>VARIANT NEM5B PRO-96</scope>
    <scope>CHARACTERIZATION OF VARIANT NEM5B PRO-96</scope>
    <scope>INVOLVEMENT IN NEM5B</scope>
</reference>
<reference key="10">
    <citation type="journal article" date="2021" name="J. Med. Genet.">
        <title>Clinical phenotype and loss of the slow skeletal muscle troponin T in three new patients with recessive TNNT1 nemaline myopathy.</title>
        <authorList>
            <person name="Geraud J."/>
            <person name="Dieterich K."/>
            <person name="Rendu J."/>
            <person name="Uro Coste E."/>
            <person name="Dobrzynski M."/>
            <person name="Marcorelle P."/>
            <person name="Ioos C."/>
            <person name="Romero N.B."/>
            <person name="Baudou E."/>
            <person name="Brocard J."/>
            <person name="Coville A.C."/>
            <person name="Faure J."/>
            <person name="Koenig M."/>
            <person name="Juntas Morales R."/>
            <person name="Lacene E."/>
            <person name="Madelaine A."/>
            <person name="Marty I."/>
            <person name="Pegeot H."/>
            <person name="Theze C."/>
            <person name="Siegfried A."/>
            <person name="Cossee M."/>
            <person name="Cances C."/>
        </authorList>
    </citation>
    <scope>VARIANTS NEM5A 6-GLU--LYS-278 DEL AND 112-GLU--LYS-278 DEL</scope>
    <scope>INVOLVEMENT IN NEM5A</scope>
</reference>
<reference key="11">
    <citation type="journal article" date="2022" name="Hum. Mutat.">
        <title>Autosomal dominantly inherited myopathy likely caused by the TNNT1 variant p.(Asp65Ala).</title>
        <authorList>
            <person name="Holling T."/>
            <person name="Lisfeld J."/>
            <person name="Johannsen J."/>
            <person name="Matschke J."/>
            <person name="Song F."/>
            <person name="Altmeppen H.C."/>
            <person name="Kutsche K."/>
        </authorList>
    </citation>
    <scope>VARIANT NEM5C ALA-65</scope>
    <scope>INVOLVEMENT IN NEM5C</scope>
    <scope>INTERACTION WITH TPM3</scope>
    <scope>CHARACTERIZATION OF VARIANTS NEM5C ALA-65 AND VAL-104</scope>
    <scope>CHARACTERIZATION OF VARIANT NEM5B PRO-96</scope>
</reference>
<reference key="12">
    <citation type="journal article" date="2022" name="Neuromuscul. Disord.">
        <title>TNNT1 myopathy with novel compound heterozygous mutations.</title>
        <authorList>
            <person name="Lee S."/>
            <person name="Eum J."/>
            <person name="Park S."/>
            <person name="Ki S."/>
            <person name="Hwang B.J."/>
            <person name="Kee Y."/>
            <person name="Chae J.H."/>
        </authorList>
    </citation>
    <scope>VARIANT NEM5B PRO-242</scope>
    <scope>INVOLVEMENT IN NEM5B</scope>
    <scope>CHARACTERIZATION OF VARIANT NEM5B PRO-242</scope>
</reference>
<keyword id="KW-0025">Alternative splicing</keyword>
<keyword id="KW-0225">Disease variant</keyword>
<keyword id="KW-0514">Muscle protein</keyword>
<keyword id="KW-1057">Nemaline myopathy</keyword>
<keyword id="KW-0597">Phosphoprotein</keyword>
<keyword id="KW-1267">Proteomics identification</keyword>
<keyword id="KW-1185">Reference proteome</keyword>
<organism>
    <name type="scientific">Homo sapiens</name>
    <name type="common">Human</name>
    <dbReference type="NCBI Taxonomy" id="9606"/>
    <lineage>
        <taxon>Eukaryota</taxon>
        <taxon>Metazoa</taxon>
        <taxon>Chordata</taxon>
        <taxon>Craniata</taxon>
        <taxon>Vertebrata</taxon>
        <taxon>Euteleostomi</taxon>
        <taxon>Mammalia</taxon>
        <taxon>Eutheria</taxon>
        <taxon>Euarchontoglires</taxon>
        <taxon>Primates</taxon>
        <taxon>Haplorrhini</taxon>
        <taxon>Catarrhini</taxon>
        <taxon>Hominidae</taxon>
        <taxon>Homo</taxon>
    </lineage>
</organism>
<gene>
    <name type="primary">TNNT1</name>
    <name type="synonym">TNT</name>
</gene>
<protein>
    <recommendedName>
        <fullName>Troponin T, slow skeletal muscle</fullName>
        <shortName>TnTs</shortName>
    </recommendedName>
    <alternativeName>
        <fullName>Slow skeletal muscle troponin T</fullName>
        <shortName>sTnT</shortName>
    </alternativeName>
</protein>